<reference key="1">
    <citation type="submission" date="2006-08" db="EMBL/GenBank/DDBJ databases">
        <authorList>
            <consortium name="NIH - Mammalian Gene Collection (MGC) project"/>
        </authorList>
    </citation>
    <scope>NUCLEOTIDE SEQUENCE [LARGE SCALE MRNA]</scope>
    <source>
        <strain>Hereford</strain>
        <tissue>Fetal skin</tissue>
    </source>
</reference>
<sequence length="353" mass="40642">MTSLLAKDAYLQGLAKKICSQPSAEPQKRKSAGKTQVSEAAAPPRKKRKKAQKKSRERERKTAKPKAQASAEKSEARKPEVAKEEEGATSSTRVPADGLAAEPDSLFALDVLRQRLHEKIQEARGQGSAKELSAAVLEKRRRRKQERDRKKRKRRELRAKEKAAKALEGAEATEPDLQVPREEAQAQPGLLFNKVEVTEEEPANKAQRRKEKRQKLKGNLTPLTGRNYRQLLERLQARQARLEDLRDRDAGQAQELEAKMRWTNLLYKAEGVRIRDDERLLQEALKRKEKRRAQRQRAWEKRTAHVVGKMQQRQDQRRQNLRKKKAAKAERRLEKARKKGRILPQDLERAGLA</sequence>
<comment type="function">
    <text evidence="1">Binds to both DNA and RNA in vitro, with a stronger binding capacity for RNA. May represent a nucleolar constitutive protein involved in ribosomal biosynthesis or assembly (By similarity).</text>
</comment>
<comment type="subcellular location">
    <subcellularLocation>
        <location evidence="1">Nucleus</location>
        <location evidence="1">Nucleoplasm</location>
    </subcellularLocation>
    <subcellularLocation>
        <location evidence="1">Nucleus</location>
        <location evidence="1">Nucleolus</location>
    </subcellularLocation>
    <text evidence="1">Granular component of the nucleolus.</text>
</comment>
<comment type="similarity">
    <text evidence="5">Belongs to the SURF6 family.</text>
</comment>
<name>SURF6_BOVIN</name>
<organism>
    <name type="scientific">Bos taurus</name>
    <name type="common">Bovine</name>
    <dbReference type="NCBI Taxonomy" id="9913"/>
    <lineage>
        <taxon>Eukaryota</taxon>
        <taxon>Metazoa</taxon>
        <taxon>Chordata</taxon>
        <taxon>Craniata</taxon>
        <taxon>Vertebrata</taxon>
        <taxon>Euteleostomi</taxon>
        <taxon>Mammalia</taxon>
        <taxon>Eutheria</taxon>
        <taxon>Laurasiatheria</taxon>
        <taxon>Artiodactyla</taxon>
        <taxon>Ruminantia</taxon>
        <taxon>Pecora</taxon>
        <taxon>Bovidae</taxon>
        <taxon>Bovinae</taxon>
        <taxon>Bos</taxon>
    </lineage>
</organism>
<gene>
    <name type="primary">SURF6</name>
</gene>
<accession>Q0VCY3</accession>
<evidence type="ECO:0000250" key="1"/>
<evidence type="ECO:0000250" key="2">
    <source>
        <dbReference type="UniProtKB" id="O75683"/>
    </source>
</evidence>
<evidence type="ECO:0000255" key="3"/>
<evidence type="ECO:0000256" key="4">
    <source>
        <dbReference type="SAM" id="MobiDB-lite"/>
    </source>
</evidence>
<evidence type="ECO:0000305" key="5"/>
<feature type="chain" id="PRO_0000284061" description="Surfeit locus protein 6">
    <location>
        <begin position="1"/>
        <end position="353"/>
    </location>
</feature>
<feature type="region of interest" description="Disordered" evidence="4">
    <location>
        <begin position="19"/>
        <end position="100"/>
    </location>
</feature>
<feature type="region of interest" description="Disordered" evidence="4">
    <location>
        <begin position="121"/>
        <end position="218"/>
    </location>
</feature>
<feature type="region of interest" description="Disordered" evidence="4">
    <location>
        <begin position="292"/>
        <end position="353"/>
    </location>
</feature>
<feature type="short sequence motif" description="Nuclear localization signal" evidence="3">
    <location>
        <begin position="45"/>
        <end position="49"/>
    </location>
</feature>
<feature type="short sequence motif" description="Nuclear localization signal" evidence="3">
    <location>
        <begin position="149"/>
        <end position="153"/>
    </location>
</feature>
<feature type="compositionally biased region" description="Basic residues" evidence="4">
    <location>
        <begin position="44"/>
        <end position="53"/>
    </location>
</feature>
<feature type="compositionally biased region" description="Basic and acidic residues" evidence="4">
    <location>
        <begin position="72"/>
        <end position="86"/>
    </location>
</feature>
<feature type="compositionally biased region" description="Basic residues" evidence="4">
    <location>
        <begin position="139"/>
        <end position="157"/>
    </location>
</feature>
<feature type="compositionally biased region" description="Basic residues" evidence="4">
    <location>
        <begin position="206"/>
        <end position="216"/>
    </location>
</feature>
<feature type="modified residue" description="Phosphoserine" evidence="2">
    <location>
        <position position="133"/>
    </location>
</feature>
<feature type="modified residue" description="Phosphothreonine" evidence="2">
    <location>
        <position position="221"/>
    </location>
</feature>
<protein>
    <recommendedName>
        <fullName>Surfeit locus protein 6</fullName>
    </recommendedName>
</protein>
<proteinExistence type="evidence at transcript level"/>
<keyword id="KW-0238">DNA-binding</keyword>
<keyword id="KW-0539">Nucleus</keyword>
<keyword id="KW-0597">Phosphoprotein</keyword>
<keyword id="KW-1185">Reference proteome</keyword>
<keyword id="KW-0694">RNA-binding</keyword>
<dbReference type="EMBL" id="BC119935">
    <property type="protein sequence ID" value="AAI19936.1"/>
    <property type="molecule type" value="mRNA"/>
</dbReference>
<dbReference type="RefSeq" id="NP_001068997.1">
    <property type="nucleotide sequence ID" value="NM_001075529.1"/>
</dbReference>
<dbReference type="SMR" id="Q0VCY3"/>
<dbReference type="FunCoup" id="Q0VCY3">
    <property type="interactions" value="2445"/>
</dbReference>
<dbReference type="STRING" id="9913.ENSBTAP00000015353"/>
<dbReference type="PaxDb" id="9913-ENSBTAP00000015353"/>
<dbReference type="PeptideAtlas" id="Q0VCY3"/>
<dbReference type="Ensembl" id="ENSBTAT00000015353.3">
    <property type="protein sequence ID" value="ENSBTAP00000015353.2"/>
    <property type="gene ID" value="ENSBTAG00000011554.3"/>
</dbReference>
<dbReference type="GeneID" id="511610"/>
<dbReference type="KEGG" id="bta:511610"/>
<dbReference type="CTD" id="6838"/>
<dbReference type="VEuPathDB" id="HostDB:ENSBTAG00000011554"/>
<dbReference type="VGNC" id="VGNC:35485">
    <property type="gene designation" value="SURF6"/>
</dbReference>
<dbReference type="eggNOG" id="KOG2885">
    <property type="taxonomic scope" value="Eukaryota"/>
</dbReference>
<dbReference type="GeneTree" id="ENSGT00390000006980"/>
<dbReference type="HOGENOM" id="CLU_067122_0_0_1"/>
<dbReference type="InParanoid" id="Q0VCY3"/>
<dbReference type="OMA" id="QKKRTDN"/>
<dbReference type="OrthoDB" id="444809at2759"/>
<dbReference type="TreeFam" id="TF321608"/>
<dbReference type="CD-CODE" id="D7FE2080">
    <property type="entry name" value="Nucleolus"/>
</dbReference>
<dbReference type="Proteomes" id="UP000009136">
    <property type="component" value="Chromosome 11"/>
</dbReference>
<dbReference type="Bgee" id="ENSBTAG00000011554">
    <property type="expression patterns" value="Expressed in esophagus and 107 other cell types or tissues"/>
</dbReference>
<dbReference type="GO" id="GO:0005694">
    <property type="term" value="C:chromosome"/>
    <property type="evidence" value="ECO:0007669"/>
    <property type="project" value="Ensembl"/>
</dbReference>
<dbReference type="GO" id="GO:0005730">
    <property type="term" value="C:nucleolus"/>
    <property type="evidence" value="ECO:0000318"/>
    <property type="project" value="GO_Central"/>
</dbReference>
<dbReference type="GO" id="GO:0005654">
    <property type="term" value="C:nucleoplasm"/>
    <property type="evidence" value="ECO:0007669"/>
    <property type="project" value="UniProtKB-SubCell"/>
</dbReference>
<dbReference type="GO" id="GO:0003677">
    <property type="term" value="F:DNA binding"/>
    <property type="evidence" value="ECO:0000318"/>
    <property type="project" value="GO_Central"/>
</dbReference>
<dbReference type="GO" id="GO:0140693">
    <property type="term" value="F:molecular condensate scaffold activity"/>
    <property type="evidence" value="ECO:0007669"/>
    <property type="project" value="Ensembl"/>
</dbReference>
<dbReference type="GO" id="GO:0003723">
    <property type="term" value="F:RNA binding"/>
    <property type="evidence" value="ECO:0000318"/>
    <property type="project" value="GO_Central"/>
</dbReference>
<dbReference type="GO" id="GO:0042273">
    <property type="term" value="P:ribosomal large subunit biogenesis"/>
    <property type="evidence" value="ECO:0000318"/>
    <property type="project" value="GO_Central"/>
</dbReference>
<dbReference type="GO" id="GO:0042274">
    <property type="term" value="P:ribosomal small subunit biogenesis"/>
    <property type="evidence" value="ECO:0000318"/>
    <property type="project" value="GO_Central"/>
</dbReference>
<dbReference type="InterPro" id="IPR029190">
    <property type="entry name" value="Rrp14/SURF6_C"/>
</dbReference>
<dbReference type="InterPro" id="IPR007019">
    <property type="entry name" value="SURF6"/>
</dbReference>
<dbReference type="PANTHER" id="PTHR14369">
    <property type="entry name" value="SURFEIT LOCUS PROTEIN 6"/>
    <property type="match status" value="1"/>
</dbReference>
<dbReference type="PANTHER" id="PTHR14369:SF0">
    <property type="entry name" value="SURFEIT LOCUS PROTEIN 6"/>
    <property type="match status" value="1"/>
</dbReference>
<dbReference type="Pfam" id="PF04935">
    <property type="entry name" value="SURF6"/>
    <property type="match status" value="1"/>
</dbReference>